<accession>Q59309</accession>
<sequence length="334" mass="36078">MTKVAINGFGRIGRLALRRILEVPGLEVVAINDLTDAKMLAHLFKYDSSQGRFNGEIEVKEGAFVVNGKEVKVFAEADPEKLPWGELGIDVVLECTGFFTKKEKAEAHVRAGAKKVVISAPAGNDLKTIVFNVNNEDLDGTETVISGASCTTNCLAPMAKVLNDKFGIEKGFMTTIHAYTNDQNTLDGPHRKGDFRRARAAAVSIIPNSTGAAKAIAQVIPELKGKLDGNAQRVPVPTGSVTELISVLKKNVTVEEINAAMKEAANESFGYTEDEIVSADVVGISYGSLFDATLTKIVDVDGSQLVKTVSWYDNEMSYTSQLVRTLEYFAKIAK</sequence>
<gene>
    <name type="primary">gap</name>
</gene>
<protein>
    <recommendedName>
        <fullName evidence="1">Glyceraldehyde-3-phosphate dehydrogenase</fullName>
        <shortName evidence="1">GAPDH</shortName>
        <ecNumber evidence="2">1.2.1.12</ecNumber>
    </recommendedName>
    <alternativeName>
        <fullName evidence="4">CP 17/CP 18</fullName>
    </alternativeName>
    <alternativeName>
        <fullName evidence="1">NAD-dependent glyceraldehyde-3-phosphate dehydrogenase</fullName>
    </alternativeName>
</protein>
<reference key="1">
    <citation type="submission" date="1993-06" db="EMBL/GenBank/DDBJ databases">
        <authorList>
            <person name="Oster T."/>
            <person name="Assobhei O."/>
            <person name="Scherrer S."/>
            <person name="Branlant G."/>
            <person name="Branlant C."/>
        </authorList>
    </citation>
    <scope>NUCLEOTIDE SEQUENCE [GENOMIC DNA]</scope>
</reference>
<reference key="2">
    <citation type="journal article" date="1998" name="Electrophoresis">
        <title>Two-dimensional gel electrophoresis separation and N-terminal sequence analysis of proteins from Clostridium pasteurianum W5.</title>
        <authorList>
            <person name="Flengsrud R."/>
            <person name="Skjeldal L."/>
        </authorList>
    </citation>
    <scope>PROTEIN SEQUENCE OF 1-26</scope>
    <source>
        <strain>ATCC 6013 / DSM 525 / NCIB 9486 / VKM B-1774 / W5</strain>
    </source>
</reference>
<keyword id="KW-0963">Cytoplasm</keyword>
<keyword id="KW-0903">Direct protein sequencing</keyword>
<keyword id="KW-0324">Glycolysis</keyword>
<keyword id="KW-0520">NAD</keyword>
<keyword id="KW-0547">Nucleotide-binding</keyword>
<keyword id="KW-0560">Oxidoreductase</keyword>
<evidence type="ECO:0000250" key="1">
    <source>
        <dbReference type="UniProtKB" id="P00362"/>
    </source>
</evidence>
<evidence type="ECO:0000250" key="2">
    <source>
        <dbReference type="UniProtKB" id="P09124"/>
    </source>
</evidence>
<evidence type="ECO:0000250" key="3">
    <source>
        <dbReference type="UniProtKB" id="Q6GIL8"/>
    </source>
</evidence>
<evidence type="ECO:0000305" key="4"/>
<name>G3P_CLOPA</name>
<dbReference type="EC" id="1.2.1.12" evidence="2"/>
<dbReference type="EMBL" id="X72219">
    <property type="protein sequence ID" value="CAA51020.1"/>
    <property type="molecule type" value="Genomic_DNA"/>
</dbReference>
<dbReference type="PIR" id="S34254">
    <property type="entry name" value="S34254"/>
</dbReference>
<dbReference type="RefSeq" id="WP_003442985.1">
    <property type="nucleotide sequence ID" value="NZ_LFYL01000002.1"/>
</dbReference>
<dbReference type="SMR" id="Q59309"/>
<dbReference type="GeneID" id="93074943"/>
<dbReference type="OrthoDB" id="9803304at2"/>
<dbReference type="UniPathway" id="UPA00109">
    <property type="reaction ID" value="UER00184"/>
</dbReference>
<dbReference type="GO" id="GO:0005737">
    <property type="term" value="C:cytoplasm"/>
    <property type="evidence" value="ECO:0007669"/>
    <property type="project" value="UniProtKB-SubCell"/>
</dbReference>
<dbReference type="GO" id="GO:0004365">
    <property type="term" value="F:glyceraldehyde-3-phosphate dehydrogenase (NAD+) (phosphorylating) activity"/>
    <property type="evidence" value="ECO:0000250"/>
    <property type="project" value="UniProtKB"/>
</dbReference>
<dbReference type="GO" id="GO:0051287">
    <property type="term" value="F:NAD binding"/>
    <property type="evidence" value="ECO:0000250"/>
    <property type="project" value="UniProtKB"/>
</dbReference>
<dbReference type="GO" id="GO:0050661">
    <property type="term" value="F:NADP binding"/>
    <property type="evidence" value="ECO:0007669"/>
    <property type="project" value="InterPro"/>
</dbReference>
<dbReference type="GO" id="GO:0006006">
    <property type="term" value="P:glucose metabolic process"/>
    <property type="evidence" value="ECO:0007669"/>
    <property type="project" value="InterPro"/>
</dbReference>
<dbReference type="GO" id="GO:0006096">
    <property type="term" value="P:glycolytic process"/>
    <property type="evidence" value="ECO:0007669"/>
    <property type="project" value="UniProtKB-UniPathway"/>
</dbReference>
<dbReference type="CDD" id="cd18126">
    <property type="entry name" value="GAPDH_I_C"/>
    <property type="match status" value="1"/>
</dbReference>
<dbReference type="CDD" id="cd05214">
    <property type="entry name" value="GAPDH_I_N"/>
    <property type="match status" value="1"/>
</dbReference>
<dbReference type="FunFam" id="3.30.360.10:FF:000002">
    <property type="entry name" value="Glyceraldehyde-3-phosphate dehydrogenase"/>
    <property type="match status" value="1"/>
</dbReference>
<dbReference type="FunFam" id="3.40.50.720:FF:000001">
    <property type="entry name" value="Glyceraldehyde-3-phosphate dehydrogenase"/>
    <property type="match status" value="1"/>
</dbReference>
<dbReference type="Gene3D" id="3.30.360.10">
    <property type="entry name" value="Dihydrodipicolinate Reductase, domain 2"/>
    <property type="match status" value="1"/>
</dbReference>
<dbReference type="Gene3D" id="3.40.50.720">
    <property type="entry name" value="NAD(P)-binding Rossmann-like Domain"/>
    <property type="match status" value="1"/>
</dbReference>
<dbReference type="InterPro" id="IPR020831">
    <property type="entry name" value="GlycerAld/Erythrose_P_DH"/>
</dbReference>
<dbReference type="InterPro" id="IPR020830">
    <property type="entry name" value="GlycerAld_3-P_DH_AS"/>
</dbReference>
<dbReference type="InterPro" id="IPR020829">
    <property type="entry name" value="GlycerAld_3-P_DH_cat"/>
</dbReference>
<dbReference type="InterPro" id="IPR020828">
    <property type="entry name" value="GlycerAld_3-P_DH_NAD(P)-bd"/>
</dbReference>
<dbReference type="InterPro" id="IPR006424">
    <property type="entry name" value="Glyceraldehyde-3-P_DH_1"/>
</dbReference>
<dbReference type="InterPro" id="IPR036291">
    <property type="entry name" value="NAD(P)-bd_dom_sf"/>
</dbReference>
<dbReference type="NCBIfam" id="TIGR01534">
    <property type="entry name" value="GAPDH-I"/>
    <property type="match status" value="1"/>
</dbReference>
<dbReference type="PANTHER" id="PTHR43148">
    <property type="entry name" value="GLYCERALDEHYDE-3-PHOSPHATE DEHYDROGENASE 2"/>
    <property type="match status" value="1"/>
</dbReference>
<dbReference type="Pfam" id="PF02800">
    <property type="entry name" value="Gp_dh_C"/>
    <property type="match status" value="1"/>
</dbReference>
<dbReference type="Pfam" id="PF00044">
    <property type="entry name" value="Gp_dh_N"/>
    <property type="match status" value="1"/>
</dbReference>
<dbReference type="PIRSF" id="PIRSF000149">
    <property type="entry name" value="GAP_DH"/>
    <property type="match status" value="1"/>
</dbReference>
<dbReference type="PRINTS" id="PR00078">
    <property type="entry name" value="G3PDHDRGNASE"/>
</dbReference>
<dbReference type="SMART" id="SM00846">
    <property type="entry name" value="Gp_dh_N"/>
    <property type="match status" value="1"/>
</dbReference>
<dbReference type="SUPFAM" id="SSF55347">
    <property type="entry name" value="Glyceraldehyde-3-phosphate dehydrogenase-like, C-terminal domain"/>
    <property type="match status" value="1"/>
</dbReference>
<dbReference type="SUPFAM" id="SSF51735">
    <property type="entry name" value="NAD(P)-binding Rossmann-fold domains"/>
    <property type="match status" value="1"/>
</dbReference>
<dbReference type="PROSITE" id="PS00071">
    <property type="entry name" value="GAPDH"/>
    <property type="match status" value="1"/>
</dbReference>
<organism>
    <name type="scientific">Clostridium pasteurianum</name>
    <dbReference type="NCBI Taxonomy" id="1501"/>
    <lineage>
        <taxon>Bacteria</taxon>
        <taxon>Bacillati</taxon>
        <taxon>Bacillota</taxon>
        <taxon>Clostridia</taxon>
        <taxon>Eubacteriales</taxon>
        <taxon>Clostridiaceae</taxon>
        <taxon>Clostridium</taxon>
    </lineage>
</organism>
<proteinExistence type="evidence at protein level"/>
<comment type="function">
    <text evidence="1">Catalyzes the oxidative phosphorylation of glyceraldehyde 3-phosphate (G3P) to 1,3-bisphosphoglycerate (BPG) using the cofactor NAD. The first reaction step involves the formation of a hemiacetal intermediate between G3P and a cysteine residue, and this hemiacetal intermediate is then oxidized to a thioester, with concomitant reduction of NAD to NADH. The reduced NADH is then exchanged with the second NAD, and the thioester is attacked by a nucleophilic inorganic phosphate to produce BPG.</text>
</comment>
<comment type="catalytic activity">
    <reaction evidence="2">
        <text>D-glyceraldehyde 3-phosphate + phosphate + NAD(+) = (2R)-3-phospho-glyceroyl phosphate + NADH + H(+)</text>
        <dbReference type="Rhea" id="RHEA:10300"/>
        <dbReference type="ChEBI" id="CHEBI:15378"/>
        <dbReference type="ChEBI" id="CHEBI:43474"/>
        <dbReference type="ChEBI" id="CHEBI:57540"/>
        <dbReference type="ChEBI" id="CHEBI:57604"/>
        <dbReference type="ChEBI" id="CHEBI:57945"/>
        <dbReference type="ChEBI" id="CHEBI:59776"/>
        <dbReference type="EC" id="1.2.1.12"/>
    </reaction>
</comment>
<comment type="pathway">
    <text evidence="4">Carbohydrate degradation; glycolysis; pyruvate from D-glyceraldehyde 3-phosphate: step 1/5.</text>
</comment>
<comment type="subunit">
    <text evidence="1">Homotetramer.</text>
</comment>
<comment type="subcellular location">
    <subcellularLocation>
        <location evidence="4">Cytoplasm</location>
    </subcellularLocation>
</comment>
<comment type="similarity">
    <text evidence="4">Belongs to the glyceraldehyde-3-phosphate dehydrogenase family.</text>
</comment>
<feature type="chain" id="PRO_0000145646" description="Glyceraldehyde-3-phosphate dehydrogenase">
    <location>
        <begin position="1"/>
        <end position="334"/>
    </location>
</feature>
<feature type="active site" description="Nucleophile" evidence="1">
    <location>
        <position position="150"/>
    </location>
</feature>
<feature type="binding site" evidence="1">
    <location>
        <begin position="11"/>
        <end position="12"/>
    </location>
    <ligand>
        <name>NAD(+)</name>
        <dbReference type="ChEBI" id="CHEBI:57540"/>
    </ligand>
</feature>
<feature type="binding site" evidence="1">
    <location>
        <position position="33"/>
    </location>
    <ligand>
        <name>NAD(+)</name>
        <dbReference type="ChEBI" id="CHEBI:57540"/>
    </ligand>
</feature>
<feature type="binding site" evidence="1">
    <location>
        <position position="119"/>
    </location>
    <ligand>
        <name>NAD(+)</name>
        <dbReference type="ChEBI" id="CHEBI:57540"/>
    </ligand>
</feature>
<feature type="binding site" evidence="1">
    <location>
        <begin position="149"/>
        <end position="151"/>
    </location>
    <ligand>
        <name>D-glyceraldehyde 3-phosphate</name>
        <dbReference type="ChEBI" id="CHEBI:59776"/>
    </ligand>
</feature>
<feature type="binding site" evidence="1">
    <location>
        <position position="180"/>
    </location>
    <ligand>
        <name>D-glyceraldehyde 3-phosphate</name>
        <dbReference type="ChEBI" id="CHEBI:59776"/>
    </ligand>
</feature>
<feature type="binding site" evidence="1">
    <location>
        <position position="181"/>
    </location>
    <ligand>
        <name>NAD(+)</name>
        <dbReference type="ChEBI" id="CHEBI:57540"/>
    </ligand>
</feature>
<feature type="binding site" evidence="1">
    <location>
        <position position="197"/>
    </location>
    <ligand>
        <name>D-glyceraldehyde 3-phosphate</name>
        <dbReference type="ChEBI" id="CHEBI:59776"/>
    </ligand>
</feature>
<feature type="binding site" evidence="1">
    <location>
        <begin position="210"/>
        <end position="211"/>
    </location>
    <ligand>
        <name>D-glyceraldehyde 3-phosphate</name>
        <dbReference type="ChEBI" id="CHEBI:59776"/>
    </ligand>
</feature>
<feature type="binding site" evidence="1">
    <location>
        <position position="233"/>
    </location>
    <ligand>
        <name>D-glyceraldehyde 3-phosphate</name>
        <dbReference type="ChEBI" id="CHEBI:59776"/>
    </ligand>
</feature>
<feature type="binding site" evidence="1">
    <location>
        <position position="314"/>
    </location>
    <ligand>
        <name>NAD(+)</name>
        <dbReference type="ChEBI" id="CHEBI:57540"/>
    </ligand>
</feature>
<feature type="site" description="Activates thiol group during catalysis" evidence="3">
    <location>
        <position position="177"/>
    </location>
</feature>